<accession>B7GY31</accession>
<gene>
    <name evidence="1" type="primary">pckG</name>
    <name type="ordered locus">ABBFA_000807</name>
</gene>
<comment type="function">
    <text evidence="1">Catalyzes the conversion of oxaloacetate (OAA) to phosphoenolpyruvate (PEP), the rate-limiting step in the metabolic pathway that produces glucose from lactate and other precursors derived from the citric acid cycle.</text>
</comment>
<comment type="catalytic activity">
    <reaction evidence="1">
        <text>oxaloacetate + GTP = phosphoenolpyruvate + GDP + CO2</text>
        <dbReference type="Rhea" id="RHEA:10388"/>
        <dbReference type="ChEBI" id="CHEBI:16452"/>
        <dbReference type="ChEBI" id="CHEBI:16526"/>
        <dbReference type="ChEBI" id="CHEBI:37565"/>
        <dbReference type="ChEBI" id="CHEBI:58189"/>
        <dbReference type="ChEBI" id="CHEBI:58702"/>
        <dbReference type="EC" id="4.1.1.32"/>
    </reaction>
</comment>
<comment type="cofactor">
    <cofactor evidence="1">
        <name>Mn(2+)</name>
        <dbReference type="ChEBI" id="CHEBI:29035"/>
    </cofactor>
    <text evidence="1">Binds 1 Mn(2+) ion per subunit.</text>
</comment>
<comment type="pathway">
    <text evidence="1">Carbohydrate biosynthesis; gluconeogenesis.</text>
</comment>
<comment type="subunit">
    <text evidence="1">Monomer.</text>
</comment>
<comment type="subcellular location">
    <subcellularLocation>
        <location evidence="1">Cytoplasm</location>
    </subcellularLocation>
</comment>
<comment type="similarity">
    <text evidence="1">Belongs to the phosphoenolpyruvate carboxykinase [GTP] family.</text>
</comment>
<dbReference type="EC" id="4.1.1.32" evidence="1"/>
<dbReference type="EMBL" id="CP001172">
    <property type="protein sequence ID" value="ACJ57912.1"/>
    <property type="molecule type" value="Genomic_DNA"/>
</dbReference>
<dbReference type="RefSeq" id="WP_000214356.1">
    <property type="nucleotide sequence ID" value="NZ_CP001172.1"/>
</dbReference>
<dbReference type="SMR" id="B7GY31"/>
<dbReference type="HOGENOM" id="CLU_028872_1_1_6"/>
<dbReference type="UniPathway" id="UPA00138"/>
<dbReference type="Proteomes" id="UP000006924">
    <property type="component" value="Chromosome"/>
</dbReference>
<dbReference type="GO" id="GO:0005829">
    <property type="term" value="C:cytosol"/>
    <property type="evidence" value="ECO:0007669"/>
    <property type="project" value="TreeGrafter"/>
</dbReference>
<dbReference type="GO" id="GO:0005525">
    <property type="term" value="F:GTP binding"/>
    <property type="evidence" value="ECO:0007669"/>
    <property type="project" value="UniProtKB-UniRule"/>
</dbReference>
<dbReference type="GO" id="GO:0030145">
    <property type="term" value="F:manganese ion binding"/>
    <property type="evidence" value="ECO:0007669"/>
    <property type="project" value="UniProtKB-UniRule"/>
</dbReference>
<dbReference type="GO" id="GO:0004613">
    <property type="term" value="F:phosphoenolpyruvate carboxykinase (GTP) activity"/>
    <property type="evidence" value="ECO:0007669"/>
    <property type="project" value="UniProtKB-UniRule"/>
</dbReference>
<dbReference type="GO" id="GO:0071333">
    <property type="term" value="P:cellular response to glucose stimulus"/>
    <property type="evidence" value="ECO:0007669"/>
    <property type="project" value="TreeGrafter"/>
</dbReference>
<dbReference type="GO" id="GO:0006094">
    <property type="term" value="P:gluconeogenesis"/>
    <property type="evidence" value="ECO:0007669"/>
    <property type="project" value="UniProtKB-UniRule"/>
</dbReference>
<dbReference type="GO" id="GO:0046327">
    <property type="term" value="P:glycerol biosynthetic process from pyruvate"/>
    <property type="evidence" value="ECO:0007669"/>
    <property type="project" value="TreeGrafter"/>
</dbReference>
<dbReference type="GO" id="GO:0006107">
    <property type="term" value="P:oxaloacetate metabolic process"/>
    <property type="evidence" value="ECO:0007669"/>
    <property type="project" value="TreeGrafter"/>
</dbReference>
<dbReference type="GO" id="GO:0019543">
    <property type="term" value="P:propionate catabolic process"/>
    <property type="evidence" value="ECO:0007669"/>
    <property type="project" value="TreeGrafter"/>
</dbReference>
<dbReference type="GO" id="GO:0033993">
    <property type="term" value="P:response to lipid"/>
    <property type="evidence" value="ECO:0007669"/>
    <property type="project" value="TreeGrafter"/>
</dbReference>
<dbReference type="GO" id="GO:0042594">
    <property type="term" value="P:response to starvation"/>
    <property type="evidence" value="ECO:0007669"/>
    <property type="project" value="TreeGrafter"/>
</dbReference>
<dbReference type="CDD" id="cd00819">
    <property type="entry name" value="PEPCK_GTP"/>
    <property type="match status" value="1"/>
</dbReference>
<dbReference type="FunFam" id="3.40.449.10:FF:000005">
    <property type="entry name" value="Phosphoenolpyruvate carboxykinase [GTP]"/>
    <property type="match status" value="1"/>
</dbReference>
<dbReference type="Gene3D" id="3.90.228.20">
    <property type="match status" value="1"/>
</dbReference>
<dbReference type="Gene3D" id="3.40.449.10">
    <property type="entry name" value="Phosphoenolpyruvate Carboxykinase, domain 1"/>
    <property type="match status" value="1"/>
</dbReference>
<dbReference type="Gene3D" id="2.170.8.10">
    <property type="entry name" value="Phosphoenolpyruvate Carboxykinase, domain 2"/>
    <property type="match status" value="1"/>
</dbReference>
<dbReference type="HAMAP" id="MF_00452">
    <property type="entry name" value="PEPCK_GTP"/>
    <property type="match status" value="1"/>
</dbReference>
<dbReference type="InterPro" id="IPR018091">
    <property type="entry name" value="PEP_carboxykin_GTP_CS"/>
</dbReference>
<dbReference type="InterPro" id="IPR013035">
    <property type="entry name" value="PEP_carboxykinase_C"/>
</dbReference>
<dbReference type="InterPro" id="IPR008209">
    <property type="entry name" value="PEP_carboxykinase_GTP"/>
</dbReference>
<dbReference type="InterPro" id="IPR035077">
    <property type="entry name" value="PEP_carboxykinase_GTP_C"/>
</dbReference>
<dbReference type="InterPro" id="IPR035078">
    <property type="entry name" value="PEP_carboxykinase_GTP_N"/>
</dbReference>
<dbReference type="InterPro" id="IPR008210">
    <property type="entry name" value="PEP_carboxykinase_N"/>
</dbReference>
<dbReference type="NCBIfam" id="NF003253">
    <property type="entry name" value="PRK04210.1"/>
    <property type="match status" value="1"/>
</dbReference>
<dbReference type="PANTHER" id="PTHR11561">
    <property type="entry name" value="PHOSPHOENOLPYRUVATE CARBOXYKINASE"/>
    <property type="match status" value="1"/>
</dbReference>
<dbReference type="PANTHER" id="PTHR11561:SF0">
    <property type="entry name" value="PHOSPHOENOLPYRUVATE CARBOXYKINASE [GTP]-RELATED"/>
    <property type="match status" value="1"/>
</dbReference>
<dbReference type="Pfam" id="PF00821">
    <property type="entry name" value="PEPCK_GTP"/>
    <property type="match status" value="1"/>
</dbReference>
<dbReference type="Pfam" id="PF17297">
    <property type="entry name" value="PEPCK_N"/>
    <property type="match status" value="1"/>
</dbReference>
<dbReference type="PIRSF" id="PIRSF001348">
    <property type="entry name" value="PEP_carboxykinase_GTP"/>
    <property type="match status" value="1"/>
</dbReference>
<dbReference type="SUPFAM" id="SSF68923">
    <property type="entry name" value="PEP carboxykinase N-terminal domain"/>
    <property type="match status" value="1"/>
</dbReference>
<dbReference type="SUPFAM" id="SSF53795">
    <property type="entry name" value="PEP carboxykinase-like"/>
    <property type="match status" value="1"/>
</dbReference>
<dbReference type="PROSITE" id="PS00505">
    <property type="entry name" value="PEPCK_GTP"/>
    <property type="match status" value="1"/>
</dbReference>
<proteinExistence type="inferred from homology"/>
<feature type="chain" id="PRO_1000125037" description="Phosphoenolpyruvate carboxykinase [GTP]">
    <location>
        <begin position="1"/>
        <end position="610"/>
    </location>
</feature>
<feature type="active site" evidence="1">
    <location>
        <position position="269"/>
    </location>
</feature>
<feature type="binding site" evidence="1">
    <location>
        <position position="77"/>
    </location>
    <ligand>
        <name>substrate</name>
    </ligand>
</feature>
<feature type="binding site" evidence="1">
    <location>
        <begin position="216"/>
        <end position="218"/>
    </location>
    <ligand>
        <name>substrate</name>
    </ligand>
</feature>
<feature type="binding site" evidence="1">
    <location>
        <position position="225"/>
    </location>
    <ligand>
        <name>Mn(2+)</name>
        <dbReference type="ChEBI" id="CHEBI:29035"/>
    </ligand>
</feature>
<feature type="binding site" evidence="1">
    <location>
        <position position="245"/>
    </location>
    <ligand>
        <name>Mn(2+)</name>
        <dbReference type="ChEBI" id="CHEBI:29035"/>
    </ligand>
</feature>
<feature type="binding site" evidence="1">
    <location>
        <position position="267"/>
    </location>
    <ligand>
        <name>substrate</name>
    </ligand>
</feature>
<feature type="binding site" evidence="1">
    <location>
        <begin position="268"/>
        <end position="273"/>
    </location>
    <ligand>
        <name>GTP</name>
        <dbReference type="ChEBI" id="CHEBI:37565"/>
    </ligand>
</feature>
<feature type="binding site" evidence="1">
    <location>
        <position position="294"/>
    </location>
    <ligand>
        <name>Mn(2+)</name>
        <dbReference type="ChEBI" id="CHEBI:29035"/>
    </ligand>
</feature>
<feature type="binding site" evidence="1">
    <location>
        <begin position="382"/>
        <end position="384"/>
    </location>
    <ligand>
        <name>substrate</name>
    </ligand>
</feature>
<feature type="binding site" evidence="1">
    <location>
        <position position="384"/>
    </location>
    <ligand>
        <name>GTP</name>
        <dbReference type="ChEBI" id="CHEBI:37565"/>
    </ligand>
</feature>
<feature type="binding site" evidence="1">
    <location>
        <position position="415"/>
    </location>
    <ligand>
        <name>GTP</name>
        <dbReference type="ChEBI" id="CHEBI:37565"/>
    </ligand>
</feature>
<feature type="binding site" evidence="1">
    <location>
        <begin position="516"/>
        <end position="519"/>
    </location>
    <ligand>
        <name>GTP</name>
        <dbReference type="ChEBI" id="CHEBI:37565"/>
    </ligand>
</feature>
<keyword id="KW-0963">Cytoplasm</keyword>
<keyword id="KW-0210">Decarboxylase</keyword>
<keyword id="KW-0312">Gluconeogenesis</keyword>
<keyword id="KW-0342">GTP-binding</keyword>
<keyword id="KW-0456">Lyase</keyword>
<keyword id="KW-0464">Manganese</keyword>
<keyword id="KW-0479">Metal-binding</keyword>
<keyword id="KW-0547">Nucleotide-binding</keyword>
<evidence type="ECO:0000255" key="1">
    <source>
        <dbReference type="HAMAP-Rule" id="MF_00452"/>
    </source>
</evidence>
<sequence>MTTVNAPEFVRHPKLIAWVEEIANLTKPAKIEWCDGSEEEYQRLIDLMIANGTMQKLNQEKHPGSYLANSDPSDVARVEDRTYICSQNKEDAGATNNWEDPAVMREKLNGLFEGSMKGRTMYVVPFSMGPLGSHIAHIGIELTDSPYVAVSMRKMARMGKAVYDVLGTDGEFVPCVHTVGAPLAEGQKDVAWPCNPEKYIVHYPETREIWSFGSGYGGNALLGKKCLALRIASVMGREQGWLAEHMLILGVTNPQGEKHYIAAAFPSACGKTNFAMLIPPAGYEGWKIETVGDDIAWIKPGEDGRLYAINPEAGFFGVAPGTNTKTNPNCMATLHKDVIYTNVAVTDDGQVWWEGLSKEVPANLTNWKGQPHVNGEKAAHPNARFTVAAGQCPSIDADWENPAGVPISAFIFGGRRADTVPLVSEAFDWVDGVYKAATMGSETTAAAVGQQGIVRRDPFAMLPFAGYNMADYFDHWLNLGAKVSEKAEASGNKLPKIFNVNWFRRDAEGNFVWPGFGQNMRVLEWIIDRCEGRANAVETPIGFVPTYEDLNWEGTEFTKEQFDLITNQDRDQWVTEIESHTELFNKLGERLPKALKERQAALLEAVKTGF</sequence>
<name>PCKG_ACIB3</name>
<reference key="1">
    <citation type="journal article" date="2008" name="J. Bacteriol.">
        <title>Comparative genome sequence analysis of multidrug-resistant Acinetobacter baumannii.</title>
        <authorList>
            <person name="Adams M.D."/>
            <person name="Goglin K."/>
            <person name="Molyneaux N."/>
            <person name="Hujer K.M."/>
            <person name="Lavender H."/>
            <person name="Jamison J.J."/>
            <person name="MacDonald I.J."/>
            <person name="Martin K.M."/>
            <person name="Russo T."/>
            <person name="Campagnari A.A."/>
            <person name="Hujer A.M."/>
            <person name="Bonomo R.A."/>
            <person name="Gill S.R."/>
        </authorList>
    </citation>
    <scope>NUCLEOTIDE SEQUENCE [LARGE SCALE GENOMIC DNA]</scope>
    <source>
        <strain>AB307-0294</strain>
    </source>
</reference>
<protein>
    <recommendedName>
        <fullName evidence="1">Phosphoenolpyruvate carboxykinase [GTP]</fullName>
        <shortName evidence="1">PEP carboxykinase</shortName>
        <shortName evidence="1">PEPCK</shortName>
        <ecNumber evidence="1">4.1.1.32</ecNumber>
    </recommendedName>
</protein>
<organism>
    <name type="scientific">Acinetobacter baumannii (strain AB307-0294)</name>
    <dbReference type="NCBI Taxonomy" id="557600"/>
    <lineage>
        <taxon>Bacteria</taxon>
        <taxon>Pseudomonadati</taxon>
        <taxon>Pseudomonadota</taxon>
        <taxon>Gammaproteobacteria</taxon>
        <taxon>Moraxellales</taxon>
        <taxon>Moraxellaceae</taxon>
        <taxon>Acinetobacter</taxon>
        <taxon>Acinetobacter calcoaceticus/baumannii complex</taxon>
    </lineage>
</organism>